<keyword id="KW-0028">Amino-acid biosynthesis</keyword>
<keyword id="KW-0100">Branched-chain amino acid biosynthesis</keyword>
<keyword id="KW-0963">Cytoplasm</keyword>
<keyword id="KW-0432">Leucine biosynthesis</keyword>
<keyword id="KW-0464">Manganese</keyword>
<keyword id="KW-0479">Metal-binding</keyword>
<keyword id="KW-0808">Transferase</keyword>
<accession>Q3MBA3</accession>
<feature type="chain" id="PRO_1000149121" description="2-isopropylmalate synthase">
    <location>
        <begin position="1"/>
        <end position="531"/>
    </location>
</feature>
<feature type="domain" description="Pyruvate carboxyltransferase" evidence="1">
    <location>
        <begin position="8"/>
        <end position="284"/>
    </location>
</feature>
<feature type="region of interest" description="Regulatory domain" evidence="1">
    <location>
        <begin position="408"/>
        <end position="531"/>
    </location>
</feature>
<feature type="binding site" evidence="1">
    <location>
        <position position="17"/>
    </location>
    <ligand>
        <name>Mn(2+)</name>
        <dbReference type="ChEBI" id="CHEBI:29035"/>
    </ligand>
</feature>
<feature type="binding site" evidence="1">
    <location>
        <position position="208"/>
    </location>
    <ligand>
        <name>Mn(2+)</name>
        <dbReference type="ChEBI" id="CHEBI:29035"/>
    </ligand>
</feature>
<feature type="binding site" evidence="1">
    <location>
        <position position="210"/>
    </location>
    <ligand>
        <name>Mn(2+)</name>
        <dbReference type="ChEBI" id="CHEBI:29035"/>
    </ligand>
</feature>
<feature type="binding site" evidence="1">
    <location>
        <position position="244"/>
    </location>
    <ligand>
        <name>Mn(2+)</name>
        <dbReference type="ChEBI" id="CHEBI:29035"/>
    </ligand>
</feature>
<protein>
    <recommendedName>
        <fullName evidence="1">2-isopropylmalate synthase</fullName>
        <ecNumber evidence="1">2.3.3.13</ecNumber>
    </recommendedName>
    <alternativeName>
        <fullName evidence="1">Alpha-IPM synthase</fullName>
    </alternativeName>
    <alternativeName>
        <fullName evidence="1">Alpha-isopropylmalate synthase</fullName>
    </alternativeName>
</protein>
<proteinExistence type="inferred from homology"/>
<reference key="1">
    <citation type="journal article" date="2014" name="Stand. Genomic Sci.">
        <title>Complete genome sequence of Anabaena variabilis ATCC 29413.</title>
        <authorList>
            <person name="Thiel T."/>
            <person name="Pratte B.S."/>
            <person name="Zhong J."/>
            <person name="Goodwin L."/>
            <person name="Copeland A."/>
            <person name="Lucas S."/>
            <person name="Han C."/>
            <person name="Pitluck S."/>
            <person name="Land M.L."/>
            <person name="Kyrpides N.C."/>
            <person name="Woyke T."/>
        </authorList>
    </citation>
    <scope>NUCLEOTIDE SEQUENCE [LARGE SCALE GENOMIC DNA]</scope>
    <source>
        <strain>ATCC 29413 / PCC 7937</strain>
    </source>
</reference>
<comment type="function">
    <text evidence="1">Catalyzes the condensation of the acetyl group of acetyl-CoA with 3-methyl-2-oxobutanoate (2-ketoisovalerate) to form 3-carboxy-3-hydroxy-4-methylpentanoate (2-isopropylmalate).</text>
</comment>
<comment type="catalytic activity">
    <reaction evidence="1">
        <text>3-methyl-2-oxobutanoate + acetyl-CoA + H2O = (2S)-2-isopropylmalate + CoA + H(+)</text>
        <dbReference type="Rhea" id="RHEA:21524"/>
        <dbReference type="ChEBI" id="CHEBI:1178"/>
        <dbReference type="ChEBI" id="CHEBI:11851"/>
        <dbReference type="ChEBI" id="CHEBI:15377"/>
        <dbReference type="ChEBI" id="CHEBI:15378"/>
        <dbReference type="ChEBI" id="CHEBI:57287"/>
        <dbReference type="ChEBI" id="CHEBI:57288"/>
        <dbReference type="EC" id="2.3.3.13"/>
    </reaction>
</comment>
<comment type="cofactor">
    <cofactor evidence="1">
        <name>Mn(2+)</name>
        <dbReference type="ChEBI" id="CHEBI:29035"/>
    </cofactor>
</comment>
<comment type="pathway">
    <text evidence="1">Amino-acid biosynthesis; L-leucine biosynthesis; L-leucine from 3-methyl-2-oxobutanoate: step 1/4.</text>
</comment>
<comment type="subunit">
    <text evidence="1">Homodimer.</text>
</comment>
<comment type="subcellular location">
    <subcellularLocation>
        <location evidence="1">Cytoplasm</location>
    </subcellularLocation>
</comment>
<comment type="similarity">
    <text evidence="1">Belongs to the alpha-IPM synthase/homocitrate synthase family. LeuA type 1 subfamily.</text>
</comment>
<dbReference type="EC" id="2.3.3.13" evidence="1"/>
<dbReference type="EMBL" id="CP000117">
    <property type="protein sequence ID" value="ABA21733.1"/>
    <property type="molecule type" value="Genomic_DNA"/>
</dbReference>
<dbReference type="SMR" id="Q3MBA3"/>
<dbReference type="STRING" id="240292.Ava_2111"/>
<dbReference type="KEGG" id="ava:Ava_2111"/>
<dbReference type="eggNOG" id="COG0119">
    <property type="taxonomic scope" value="Bacteria"/>
</dbReference>
<dbReference type="HOGENOM" id="CLU_022158_0_1_3"/>
<dbReference type="UniPathway" id="UPA00048">
    <property type="reaction ID" value="UER00070"/>
</dbReference>
<dbReference type="Proteomes" id="UP000002533">
    <property type="component" value="Chromosome"/>
</dbReference>
<dbReference type="GO" id="GO:0005737">
    <property type="term" value="C:cytoplasm"/>
    <property type="evidence" value="ECO:0007669"/>
    <property type="project" value="UniProtKB-SubCell"/>
</dbReference>
<dbReference type="GO" id="GO:0003852">
    <property type="term" value="F:2-isopropylmalate synthase activity"/>
    <property type="evidence" value="ECO:0007669"/>
    <property type="project" value="UniProtKB-UniRule"/>
</dbReference>
<dbReference type="GO" id="GO:0003985">
    <property type="term" value="F:acetyl-CoA C-acetyltransferase activity"/>
    <property type="evidence" value="ECO:0007669"/>
    <property type="project" value="UniProtKB-UniRule"/>
</dbReference>
<dbReference type="GO" id="GO:0030145">
    <property type="term" value="F:manganese ion binding"/>
    <property type="evidence" value="ECO:0007669"/>
    <property type="project" value="UniProtKB-UniRule"/>
</dbReference>
<dbReference type="GO" id="GO:0009098">
    <property type="term" value="P:L-leucine biosynthetic process"/>
    <property type="evidence" value="ECO:0007669"/>
    <property type="project" value="UniProtKB-UniRule"/>
</dbReference>
<dbReference type="CDD" id="cd07940">
    <property type="entry name" value="DRE_TIM_IPMS"/>
    <property type="match status" value="1"/>
</dbReference>
<dbReference type="FunFam" id="1.10.238.260:FF:000001">
    <property type="entry name" value="2-isopropylmalate synthase"/>
    <property type="match status" value="1"/>
</dbReference>
<dbReference type="FunFam" id="3.20.20.70:FF:000010">
    <property type="entry name" value="2-isopropylmalate synthase"/>
    <property type="match status" value="1"/>
</dbReference>
<dbReference type="FunFam" id="3.30.160.270:FF:000001">
    <property type="entry name" value="2-isopropylmalate synthase"/>
    <property type="match status" value="1"/>
</dbReference>
<dbReference type="Gene3D" id="1.10.238.260">
    <property type="match status" value="1"/>
</dbReference>
<dbReference type="Gene3D" id="3.30.160.270">
    <property type="match status" value="1"/>
</dbReference>
<dbReference type="Gene3D" id="3.20.20.70">
    <property type="entry name" value="Aldolase class I"/>
    <property type="match status" value="1"/>
</dbReference>
<dbReference type="HAMAP" id="MF_01025">
    <property type="entry name" value="LeuA_type1"/>
    <property type="match status" value="1"/>
</dbReference>
<dbReference type="InterPro" id="IPR050073">
    <property type="entry name" value="2-IPM_HCS-like"/>
</dbReference>
<dbReference type="InterPro" id="IPR013709">
    <property type="entry name" value="2-isopropylmalate_synth_dimer"/>
</dbReference>
<dbReference type="InterPro" id="IPR002034">
    <property type="entry name" value="AIPM/Hcit_synth_CS"/>
</dbReference>
<dbReference type="InterPro" id="IPR013785">
    <property type="entry name" value="Aldolase_TIM"/>
</dbReference>
<dbReference type="InterPro" id="IPR054691">
    <property type="entry name" value="LeuA/HCS_post-cat"/>
</dbReference>
<dbReference type="InterPro" id="IPR036230">
    <property type="entry name" value="LeuA_allosteric_dom_sf"/>
</dbReference>
<dbReference type="InterPro" id="IPR005671">
    <property type="entry name" value="LeuA_bact_synth"/>
</dbReference>
<dbReference type="InterPro" id="IPR000891">
    <property type="entry name" value="PYR_CT"/>
</dbReference>
<dbReference type="NCBIfam" id="TIGR00973">
    <property type="entry name" value="leuA_bact"/>
    <property type="match status" value="1"/>
</dbReference>
<dbReference type="NCBIfam" id="NF002086">
    <property type="entry name" value="PRK00915.1-3"/>
    <property type="match status" value="1"/>
</dbReference>
<dbReference type="PANTHER" id="PTHR10277:SF9">
    <property type="entry name" value="2-ISOPROPYLMALATE SYNTHASE 1, CHLOROPLASTIC-RELATED"/>
    <property type="match status" value="1"/>
</dbReference>
<dbReference type="PANTHER" id="PTHR10277">
    <property type="entry name" value="HOMOCITRATE SYNTHASE-RELATED"/>
    <property type="match status" value="1"/>
</dbReference>
<dbReference type="Pfam" id="PF22617">
    <property type="entry name" value="HCS_D2"/>
    <property type="match status" value="1"/>
</dbReference>
<dbReference type="Pfam" id="PF00682">
    <property type="entry name" value="HMGL-like"/>
    <property type="match status" value="1"/>
</dbReference>
<dbReference type="Pfam" id="PF08502">
    <property type="entry name" value="LeuA_dimer"/>
    <property type="match status" value="1"/>
</dbReference>
<dbReference type="SMART" id="SM00917">
    <property type="entry name" value="LeuA_dimer"/>
    <property type="match status" value="1"/>
</dbReference>
<dbReference type="SUPFAM" id="SSF110921">
    <property type="entry name" value="2-isopropylmalate synthase LeuA, allosteric (dimerisation) domain"/>
    <property type="match status" value="1"/>
</dbReference>
<dbReference type="SUPFAM" id="SSF51569">
    <property type="entry name" value="Aldolase"/>
    <property type="match status" value="1"/>
</dbReference>
<dbReference type="PROSITE" id="PS00815">
    <property type="entry name" value="AIPM_HOMOCIT_SYNTH_1"/>
    <property type="match status" value="1"/>
</dbReference>
<dbReference type="PROSITE" id="PS00816">
    <property type="entry name" value="AIPM_HOMOCIT_SYNTH_2"/>
    <property type="match status" value="1"/>
</dbReference>
<dbReference type="PROSITE" id="PS50991">
    <property type="entry name" value="PYR_CT"/>
    <property type="match status" value="1"/>
</dbReference>
<evidence type="ECO:0000255" key="1">
    <source>
        <dbReference type="HAMAP-Rule" id="MF_01025"/>
    </source>
</evidence>
<organism>
    <name type="scientific">Trichormus variabilis (strain ATCC 29413 / PCC 7937)</name>
    <name type="common">Anabaena variabilis</name>
    <dbReference type="NCBI Taxonomy" id="240292"/>
    <lineage>
        <taxon>Bacteria</taxon>
        <taxon>Bacillati</taxon>
        <taxon>Cyanobacteriota</taxon>
        <taxon>Cyanophyceae</taxon>
        <taxon>Nostocales</taxon>
        <taxon>Nostocaceae</taxon>
        <taxon>Trichormus</taxon>
    </lineage>
</organism>
<name>LEU1_TRIV2</name>
<gene>
    <name evidence="1" type="primary">leuA</name>
    <name type="ordered locus">Ava_2111</name>
</gene>
<sequence length="531" mass="57844">MTTKPERIIIFDTTLRDGEQCPGATLNIDEKLAIAKQLARLGVDIIEAGFAFASPGDFEAVHKIAQTVGTENGPVICSLARARHDDIKAAAEAIKPAAKGRIHTFIATSDIHLQYKLKKTRPEVIAIAEEMVAYAKSFTDDVEFSPEDAGRSDPEFLYQVLERAIAAGATTINIPDTVGYTTPSEFGAIIKGIKENVPNIDQAIISVHGHNDLGLAVANFLEAVKNGARQLECTINGIGERAGNAALEELVMAMHVRRQYFNPFLGRHPDSEEPLTNIDTKQIYKTSRLVSNLTGMLVQPNKAIVGANAFAHESGIHQDGVLKNKLTYEIMDAQLIGLTDNQIVLGKHSGRNAFRTRLKELGFELSETELNKAFVKFKEVADKKKEISDWDLEAIVNDEIQQAPDLFRVELVQVSCGSNARPTATVTLRTPDGEELTDAAIGTGPVDAVYKAINRVVNVPNQLIEFSVQSVTAGIDAIGEVTIRLRYESRVFSGHAANTDIIVASAQAYVNALNRLYASLQTQDKQTEVTA</sequence>